<evidence type="ECO:0000255" key="1">
    <source>
        <dbReference type="HAMAP-Rule" id="MF_01539"/>
    </source>
</evidence>
<protein>
    <recommendedName>
        <fullName evidence="1">tRNA(Met) cytidine acetate ligase</fullName>
        <ecNumber evidence="1">6.3.4.-</ecNumber>
    </recommendedName>
</protein>
<feature type="chain" id="PRO_1000146636" description="tRNA(Met) cytidine acetate ligase">
    <location>
        <begin position="1"/>
        <end position="423"/>
    </location>
</feature>
<feature type="binding site" evidence="1">
    <location>
        <begin position="7"/>
        <end position="20"/>
    </location>
    <ligand>
        <name>ATP</name>
        <dbReference type="ChEBI" id="CHEBI:30616"/>
    </ligand>
</feature>
<feature type="binding site" evidence="1">
    <location>
        <position position="102"/>
    </location>
    <ligand>
        <name>ATP</name>
        <dbReference type="ChEBI" id="CHEBI:30616"/>
    </ligand>
</feature>
<feature type="binding site" evidence="1">
    <location>
        <position position="165"/>
    </location>
    <ligand>
        <name>ATP</name>
        <dbReference type="ChEBI" id="CHEBI:30616"/>
    </ligand>
</feature>
<feature type="binding site" evidence="1">
    <location>
        <position position="190"/>
    </location>
    <ligand>
        <name>ATP</name>
        <dbReference type="ChEBI" id="CHEBI:30616"/>
    </ligand>
</feature>
<accession>B7IEZ2</accession>
<sequence>MKVLGVVVEYNPFHNGHLYHLKSAKKLVKPDFTIAVMSGNFCQRGEPAIVNKFARAKMALLNGIDVVLEIPTVYALQDAGGFAFGSVGLMHKLGLVTDIVFGSESADISFLEKISKILYENSKEFDYLIKRELKKGLSYPNARKFALQKFLKTDLDTIKKLENSNDILGIEYIKAIFKYNSNIKYHVIKRVGAKYNEQNLSGKFSSATAIRNAIKFEKNIKEYVPESTYLILKDEFEKGRGPVFLENLEQFILSEFRLKARENLENIYGFSEGLDKRFIDSANISTNLKEFIENIKAKRFTFSRIRRLIFHAIFNFEKNYMEFSNKLGPQYARVLGFTTKGQEFLSYAKKKSTIPIITNPSLKNKILKDVLKNSERKWDFNISLYNWQFEKDILASNIYTLFYPNSSQRKSGMDFRKPIIIEG</sequence>
<name>TMCAL_THEAB</name>
<keyword id="KW-0067">ATP-binding</keyword>
<keyword id="KW-0963">Cytoplasm</keyword>
<keyword id="KW-0436">Ligase</keyword>
<keyword id="KW-0547">Nucleotide-binding</keyword>
<keyword id="KW-1185">Reference proteome</keyword>
<keyword id="KW-0694">RNA-binding</keyword>
<keyword id="KW-0819">tRNA processing</keyword>
<keyword id="KW-0820">tRNA-binding</keyword>
<gene>
    <name evidence="1" type="primary">tmcAL</name>
    <name type="ordered locus">THA_149</name>
</gene>
<organism>
    <name type="scientific">Thermosipho africanus (strain TCF52B)</name>
    <dbReference type="NCBI Taxonomy" id="484019"/>
    <lineage>
        <taxon>Bacteria</taxon>
        <taxon>Thermotogati</taxon>
        <taxon>Thermotogota</taxon>
        <taxon>Thermotogae</taxon>
        <taxon>Thermotogales</taxon>
        <taxon>Fervidobacteriaceae</taxon>
        <taxon>Thermosipho</taxon>
    </lineage>
</organism>
<comment type="function">
    <text evidence="1">Catalyzes the formation of N(4)-acetylcytidine (ac(4)C) at the wobble position of elongator tRNA(Met), using acetate and ATP as substrates. First activates an acetate ion to form acetyladenylate (Ac-AMP) and then transfers the acetyl group to tRNA to form ac(4)C34.</text>
</comment>
<comment type="catalytic activity">
    <reaction evidence="1">
        <text>cytidine(34) in elongator tRNA(Met) + acetate + ATP = N(4)-acetylcytidine(34) in elongator tRNA(Met) + AMP + diphosphate</text>
        <dbReference type="Rhea" id="RHEA:58144"/>
        <dbReference type="Rhea" id="RHEA-COMP:10693"/>
        <dbReference type="Rhea" id="RHEA-COMP:10694"/>
        <dbReference type="ChEBI" id="CHEBI:30089"/>
        <dbReference type="ChEBI" id="CHEBI:30616"/>
        <dbReference type="ChEBI" id="CHEBI:33019"/>
        <dbReference type="ChEBI" id="CHEBI:74900"/>
        <dbReference type="ChEBI" id="CHEBI:82748"/>
        <dbReference type="ChEBI" id="CHEBI:456215"/>
    </reaction>
</comment>
<comment type="subcellular location">
    <subcellularLocation>
        <location evidence="1">Cytoplasm</location>
    </subcellularLocation>
</comment>
<comment type="similarity">
    <text evidence="1">Belongs to the TmcAL family.</text>
</comment>
<proteinExistence type="inferred from homology"/>
<dbReference type="EC" id="6.3.4.-" evidence="1"/>
<dbReference type="EMBL" id="CP001185">
    <property type="protein sequence ID" value="ACJ74656.1"/>
    <property type="molecule type" value="Genomic_DNA"/>
</dbReference>
<dbReference type="RefSeq" id="WP_012579375.1">
    <property type="nucleotide sequence ID" value="NC_011653.1"/>
</dbReference>
<dbReference type="SMR" id="B7IEZ2"/>
<dbReference type="STRING" id="484019.THA_149"/>
<dbReference type="KEGG" id="taf:THA_149"/>
<dbReference type="eggNOG" id="COG1323">
    <property type="taxonomic scope" value="Bacteria"/>
</dbReference>
<dbReference type="HOGENOM" id="CLU_038915_0_1_0"/>
<dbReference type="OrthoDB" id="9769796at2"/>
<dbReference type="Proteomes" id="UP000002453">
    <property type="component" value="Chromosome"/>
</dbReference>
<dbReference type="GO" id="GO:0005737">
    <property type="term" value="C:cytoplasm"/>
    <property type="evidence" value="ECO:0007669"/>
    <property type="project" value="UniProtKB-SubCell"/>
</dbReference>
<dbReference type="GO" id="GO:0005524">
    <property type="term" value="F:ATP binding"/>
    <property type="evidence" value="ECO:0007669"/>
    <property type="project" value="UniProtKB-KW"/>
</dbReference>
<dbReference type="GO" id="GO:0016879">
    <property type="term" value="F:ligase activity, forming carbon-nitrogen bonds"/>
    <property type="evidence" value="ECO:0007669"/>
    <property type="project" value="UniProtKB-UniRule"/>
</dbReference>
<dbReference type="GO" id="GO:0000049">
    <property type="term" value="F:tRNA binding"/>
    <property type="evidence" value="ECO:0007669"/>
    <property type="project" value="UniProtKB-KW"/>
</dbReference>
<dbReference type="GO" id="GO:0006400">
    <property type="term" value="P:tRNA modification"/>
    <property type="evidence" value="ECO:0007669"/>
    <property type="project" value="UniProtKB-UniRule"/>
</dbReference>
<dbReference type="Gene3D" id="3.40.50.620">
    <property type="entry name" value="HUPs"/>
    <property type="match status" value="1"/>
</dbReference>
<dbReference type="HAMAP" id="MF_01539">
    <property type="entry name" value="TmcAL"/>
    <property type="match status" value="1"/>
</dbReference>
<dbReference type="InterPro" id="IPR014729">
    <property type="entry name" value="Rossmann-like_a/b/a_fold"/>
</dbReference>
<dbReference type="InterPro" id="IPR008513">
    <property type="entry name" value="tRNA(Met)_cyd_acetate_ligase"/>
</dbReference>
<dbReference type="NCBIfam" id="NF010191">
    <property type="entry name" value="PRK13670.1"/>
    <property type="match status" value="1"/>
</dbReference>
<dbReference type="PANTHER" id="PTHR37825">
    <property type="entry name" value="TRNA(MET) CYTIDINE ACETATE LIGASE"/>
    <property type="match status" value="1"/>
</dbReference>
<dbReference type="PANTHER" id="PTHR37825:SF1">
    <property type="entry name" value="TRNA(MET) CYTIDINE ACETATE LIGASE"/>
    <property type="match status" value="1"/>
</dbReference>
<dbReference type="Pfam" id="PF05636">
    <property type="entry name" value="HIGH_NTase1"/>
    <property type="match status" value="1"/>
</dbReference>
<dbReference type="SUPFAM" id="SSF52374">
    <property type="entry name" value="Nucleotidylyl transferase"/>
    <property type="match status" value="1"/>
</dbReference>
<reference key="1">
    <citation type="journal article" date="2009" name="J. Bacteriol.">
        <title>The genome of Thermosipho africanus TCF52B: lateral genetic connections to the Firmicutes and Archaea.</title>
        <authorList>
            <person name="Nesboe C.L."/>
            <person name="Bapteste E."/>
            <person name="Curtis B."/>
            <person name="Dahle H."/>
            <person name="Lopez P."/>
            <person name="Macleod D."/>
            <person name="Dlutek M."/>
            <person name="Bowman S."/>
            <person name="Zhaxybayeva O."/>
            <person name="Birkeland N.-K."/>
            <person name="Doolittle W.F."/>
        </authorList>
    </citation>
    <scope>NUCLEOTIDE SEQUENCE [LARGE SCALE GENOMIC DNA]</scope>
    <source>
        <strain>TCF52B</strain>
    </source>
</reference>